<proteinExistence type="evidence at protein level"/>
<organism>
    <name type="scientific">Saccharomyces cerevisiae (strain ATCC 204508 / S288c)</name>
    <name type="common">Baker's yeast</name>
    <dbReference type="NCBI Taxonomy" id="559292"/>
    <lineage>
        <taxon>Eukaryota</taxon>
        <taxon>Fungi</taxon>
        <taxon>Dikarya</taxon>
        <taxon>Ascomycota</taxon>
        <taxon>Saccharomycotina</taxon>
        <taxon>Saccharomycetes</taxon>
        <taxon>Saccharomycetales</taxon>
        <taxon>Saccharomycetaceae</taxon>
        <taxon>Saccharomyces</taxon>
    </lineage>
</organism>
<gene>
    <name type="primary">REX2</name>
    <name type="synonym">YNT20</name>
    <name type="ordered locus">YLR059C</name>
    <name type="ORF">L2159</name>
</gene>
<reference key="1">
    <citation type="submission" date="1995-10" db="EMBL/GenBank/DDBJ databases">
        <authorList>
            <person name="Hanekamp T."/>
            <person name="Thorsness P.E."/>
        </authorList>
    </citation>
    <scope>NUCLEOTIDE SEQUENCE [GENOMIC DNA]</scope>
    <source>
        <strain>ATCC 204508 / S288c</strain>
    </source>
</reference>
<reference key="2">
    <citation type="journal article" date="1997" name="Nature">
        <title>The nucleotide sequence of Saccharomyces cerevisiae chromosome XII.</title>
        <authorList>
            <person name="Johnston M."/>
            <person name="Hillier L.W."/>
            <person name="Riles L."/>
            <person name="Albermann K."/>
            <person name="Andre B."/>
            <person name="Ansorge W."/>
            <person name="Benes V."/>
            <person name="Brueckner M."/>
            <person name="Delius H."/>
            <person name="Dubois E."/>
            <person name="Duesterhoeft A."/>
            <person name="Entian K.-D."/>
            <person name="Floeth M."/>
            <person name="Goffeau A."/>
            <person name="Hebling U."/>
            <person name="Heumann K."/>
            <person name="Heuss-Neitzel D."/>
            <person name="Hilbert H."/>
            <person name="Hilger F."/>
            <person name="Kleine K."/>
            <person name="Koetter P."/>
            <person name="Louis E.J."/>
            <person name="Messenguy F."/>
            <person name="Mewes H.-W."/>
            <person name="Miosga T."/>
            <person name="Moestl D."/>
            <person name="Mueller-Auer S."/>
            <person name="Nentwich U."/>
            <person name="Obermaier B."/>
            <person name="Piravandi E."/>
            <person name="Pohl T.M."/>
            <person name="Portetelle D."/>
            <person name="Purnelle B."/>
            <person name="Rechmann S."/>
            <person name="Rieger M."/>
            <person name="Rinke M."/>
            <person name="Rose M."/>
            <person name="Scharfe M."/>
            <person name="Scherens B."/>
            <person name="Scholler P."/>
            <person name="Schwager C."/>
            <person name="Schwarz S."/>
            <person name="Underwood A.P."/>
            <person name="Urrestarazu L.A."/>
            <person name="Vandenbol M."/>
            <person name="Verhasselt P."/>
            <person name="Vierendeels F."/>
            <person name="Voet M."/>
            <person name="Volckaert G."/>
            <person name="Voss H."/>
            <person name="Wambutt R."/>
            <person name="Wedler E."/>
            <person name="Wedler H."/>
            <person name="Zimmermann F.K."/>
            <person name="Zollner A."/>
            <person name="Hani J."/>
            <person name="Hoheisel J.D."/>
        </authorList>
    </citation>
    <scope>NUCLEOTIDE SEQUENCE [LARGE SCALE GENOMIC DNA]</scope>
    <source>
        <strain>ATCC 204508 / S288c</strain>
    </source>
</reference>
<reference key="3">
    <citation type="journal article" date="2014" name="G3 (Bethesda)">
        <title>The reference genome sequence of Saccharomyces cerevisiae: Then and now.</title>
        <authorList>
            <person name="Engel S.R."/>
            <person name="Dietrich F.S."/>
            <person name="Fisk D.G."/>
            <person name="Binkley G."/>
            <person name="Balakrishnan R."/>
            <person name="Costanzo M.C."/>
            <person name="Dwight S.S."/>
            <person name="Hitz B.C."/>
            <person name="Karra K."/>
            <person name="Nash R.S."/>
            <person name="Weng S."/>
            <person name="Wong E.D."/>
            <person name="Lloyd P."/>
            <person name="Skrzypek M.S."/>
            <person name="Miyasato S.R."/>
            <person name="Simison M."/>
            <person name="Cherry J.M."/>
        </authorList>
    </citation>
    <scope>GENOME REANNOTATION</scope>
    <source>
        <strain>ATCC 204508 / S288c</strain>
    </source>
</reference>
<reference key="4">
    <citation type="journal article" date="2007" name="Genome Res.">
        <title>Approaching a complete repository of sequence-verified protein-encoding clones for Saccharomyces cerevisiae.</title>
        <authorList>
            <person name="Hu Y."/>
            <person name="Rolfs A."/>
            <person name="Bhullar B."/>
            <person name="Murthy T.V.S."/>
            <person name="Zhu C."/>
            <person name="Berger M.F."/>
            <person name="Camargo A.A."/>
            <person name="Kelley F."/>
            <person name="McCarron S."/>
            <person name="Jepson D."/>
            <person name="Richardson A."/>
            <person name="Raphael J."/>
            <person name="Moreira D."/>
            <person name="Taycher E."/>
            <person name="Zuo D."/>
            <person name="Mohr S."/>
            <person name="Kane M.F."/>
            <person name="Williamson J."/>
            <person name="Simpson A.J.G."/>
            <person name="Bulyk M.L."/>
            <person name="Harlow E."/>
            <person name="Marsischky G."/>
            <person name="Kolodner R.D."/>
            <person name="LaBaer J."/>
        </authorList>
    </citation>
    <scope>NUCLEOTIDE SEQUENCE [GENOMIC DNA]</scope>
    <source>
        <strain>ATCC 204508 / S288c</strain>
    </source>
</reference>
<reference key="5">
    <citation type="journal article" date="1999" name="Curr. Genet.">
        <title>YNT20, a bypass suppressor of yme1 yme2, encodes a putative 3'-5' exonuclease localized in mitochondria of Saccharomyces cerevisiae.</title>
        <authorList>
            <person name="Hanekamp T."/>
            <person name="Thorsness P.E."/>
        </authorList>
    </citation>
    <scope>IDENTIFICATION</scope>
    <scope>SUBCELLULAR LOCATION</scope>
</reference>
<reference key="6">
    <citation type="journal article" date="2003" name="Nature">
        <title>Global analysis of protein expression in yeast.</title>
        <authorList>
            <person name="Ghaemmaghami S."/>
            <person name="Huh W.-K."/>
            <person name="Bower K."/>
            <person name="Howson R.W."/>
            <person name="Belle A."/>
            <person name="Dephoure N."/>
            <person name="O'Shea E.K."/>
            <person name="Weissman J.S."/>
        </authorList>
    </citation>
    <scope>LEVEL OF PROTEIN EXPRESSION [LARGE SCALE ANALYSIS]</scope>
</reference>
<comment type="function">
    <text evidence="1">3'-to-5' exoribonuclease specific for small oligoribonucleotides.</text>
</comment>
<comment type="subcellular location">
    <subcellularLocation>
        <location evidence="5">Mitochondrion</location>
    </subcellularLocation>
</comment>
<comment type="miscellaneous">
    <text evidence="4">Present with 1730 molecules/cell in log phase SD medium.</text>
</comment>
<comment type="similarity">
    <text evidence="6">Belongs to the oligoribonuclease family.</text>
</comment>
<dbReference type="EC" id="3.1.15.-"/>
<dbReference type="EMBL" id="L47977">
    <property type="protein sequence ID" value="AAA98633.1"/>
    <property type="molecule type" value="Genomic_DNA"/>
</dbReference>
<dbReference type="EMBL" id="X94607">
    <property type="protein sequence ID" value="CAA64306.1"/>
    <property type="molecule type" value="Genomic_DNA"/>
</dbReference>
<dbReference type="EMBL" id="Z73231">
    <property type="protein sequence ID" value="CAA97590.1"/>
    <property type="molecule type" value="Genomic_DNA"/>
</dbReference>
<dbReference type="EMBL" id="AY693005">
    <property type="protein sequence ID" value="AAT93024.1"/>
    <property type="molecule type" value="Genomic_DNA"/>
</dbReference>
<dbReference type="EMBL" id="BK006945">
    <property type="protein sequence ID" value="DAA09377.1"/>
    <property type="molecule type" value="Genomic_DNA"/>
</dbReference>
<dbReference type="PIR" id="S61633">
    <property type="entry name" value="S61633"/>
</dbReference>
<dbReference type="RefSeq" id="NP_013160.1">
    <property type="nucleotide sequence ID" value="NM_001181946.1"/>
</dbReference>
<dbReference type="SMR" id="P54964"/>
<dbReference type="BioGRID" id="31334">
    <property type="interactions" value="105"/>
</dbReference>
<dbReference type="DIP" id="DIP-5084N"/>
<dbReference type="FunCoup" id="P54964">
    <property type="interactions" value="883"/>
</dbReference>
<dbReference type="IntAct" id="P54964">
    <property type="interactions" value="5"/>
</dbReference>
<dbReference type="STRING" id="4932.YLR059C"/>
<dbReference type="iPTMnet" id="P54964"/>
<dbReference type="PaxDb" id="4932-YLR059C"/>
<dbReference type="PeptideAtlas" id="P54964"/>
<dbReference type="EnsemblFungi" id="YLR059C_mRNA">
    <property type="protein sequence ID" value="YLR059C"/>
    <property type="gene ID" value="YLR059C"/>
</dbReference>
<dbReference type="GeneID" id="850748"/>
<dbReference type="KEGG" id="sce:YLR059C"/>
<dbReference type="AGR" id="SGD:S000004049"/>
<dbReference type="SGD" id="S000004049">
    <property type="gene designation" value="REX2"/>
</dbReference>
<dbReference type="VEuPathDB" id="FungiDB:YLR059C"/>
<dbReference type="eggNOG" id="KOG3242">
    <property type="taxonomic scope" value="Eukaryota"/>
</dbReference>
<dbReference type="GeneTree" id="ENSGT00390000009255"/>
<dbReference type="HOGENOM" id="CLU_064761_0_2_1"/>
<dbReference type="InParanoid" id="P54964"/>
<dbReference type="OMA" id="YMPLVNN"/>
<dbReference type="OrthoDB" id="270189at2759"/>
<dbReference type="BioCyc" id="YEAST:G3O-32213-MONOMER"/>
<dbReference type="BioGRID-ORCS" id="850748">
    <property type="hits" value="2 hits in 10 CRISPR screens"/>
</dbReference>
<dbReference type="PRO" id="PR:P54964"/>
<dbReference type="Proteomes" id="UP000002311">
    <property type="component" value="Chromosome XII"/>
</dbReference>
<dbReference type="RNAct" id="P54964">
    <property type="molecule type" value="protein"/>
</dbReference>
<dbReference type="GO" id="GO:0005739">
    <property type="term" value="C:mitochondrion"/>
    <property type="evidence" value="ECO:0000314"/>
    <property type="project" value="SGD"/>
</dbReference>
<dbReference type="GO" id="GO:0000175">
    <property type="term" value="F:3'-5'-RNA exonuclease activity"/>
    <property type="evidence" value="ECO:0000315"/>
    <property type="project" value="SGD"/>
</dbReference>
<dbReference type="GO" id="GO:0003676">
    <property type="term" value="F:nucleic acid binding"/>
    <property type="evidence" value="ECO:0007669"/>
    <property type="project" value="InterPro"/>
</dbReference>
<dbReference type="GO" id="GO:0000467">
    <property type="term" value="P:exonucleolytic trimming to generate mature 3'-end of 5.8S rRNA from tricistronic rRNA transcript (SSU-rRNA, 5.8S rRNA, LSU-rRNA)"/>
    <property type="evidence" value="ECO:0000316"/>
    <property type="project" value="SGD"/>
</dbReference>
<dbReference type="GO" id="GO:0000002">
    <property type="term" value="P:mitochondrial genome maintenance"/>
    <property type="evidence" value="ECO:0000315"/>
    <property type="project" value="SGD"/>
</dbReference>
<dbReference type="GO" id="GO:0034475">
    <property type="term" value="P:U4 snRNA 3'-end processing"/>
    <property type="evidence" value="ECO:0000315"/>
    <property type="project" value="SGD"/>
</dbReference>
<dbReference type="GO" id="GO:0034476">
    <property type="term" value="P:U5 snRNA 3'-end processing"/>
    <property type="evidence" value="ECO:0000316"/>
    <property type="project" value="SGD"/>
</dbReference>
<dbReference type="CDD" id="cd06135">
    <property type="entry name" value="Orn"/>
    <property type="match status" value="1"/>
</dbReference>
<dbReference type="FunFam" id="3.30.420.10:FF:000003">
    <property type="entry name" value="Oligoribonuclease"/>
    <property type="match status" value="1"/>
</dbReference>
<dbReference type="Gene3D" id="3.30.420.10">
    <property type="entry name" value="Ribonuclease H-like superfamily/Ribonuclease H"/>
    <property type="match status" value="1"/>
</dbReference>
<dbReference type="InterPro" id="IPR013520">
    <property type="entry name" value="Exonuclease_RNaseT/DNA_pol3"/>
</dbReference>
<dbReference type="InterPro" id="IPR022894">
    <property type="entry name" value="Oligoribonuclease"/>
</dbReference>
<dbReference type="InterPro" id="IPR012337">
    <property type="entry name" value="RNaseH-like_sf"/>
</dbReference>
<dbReference type="InterPro" id="IPR036397">
    <property type="entry name" value="RNaseH_sf"/>
</dbReference>
<dbReference type="NCBIfam" id="NF003765">
    <property type="entry name" value="PRK05359.1"/>
    <property type="match status" value="1"/>
</dbReference>
<dbReference type="PANTHER" id="PTHR11046">
    <property type="entry name" value="OLIGORIBONUCLEASE, MITOCHONDRIAL"/>
    <property type="match status" value="1"/>
</dbReference>
<dbReference type="PANTHER" id="PTHR11046:SF0">
    <property type="entry name" value="OLIGORIBONUCLEASE, MITOCHONDRIAL"/>
    <property type="match status" value="1"/>
</dbReference>
<dbReference type="Pfam" id="PF00929">
    <property type="entry name" value="RNase_T"/>
    <property type="match status" value="1"/>
</dbReference>
<dbReference type="SMART" id="SM00479">
    <property type="entry name" value="EXOIII"/>
    <property type="match status" value="1"/>
</dbReference>
<dbReference type="SUPFAM" id="SSF53098">
    <property type="entry name" value="Ribonuclease H-like"/>
    <property type="match status" value="1"/>
</dbReference>
<feature type="transit peptide" description="Mitochondrion" evidence="2">
    <location>
        <begin position="1"/>
        <end status="unknown"/>
    </location>
</feature>
<feature type="chain" id="PRO_0000020274" description="Oligoribonuclease, mitochondrial">
    <location>
        <begin status="unknown"/>
        <end position="269"/>
    </location>
</feature>
<feature type="domain" description="Exonuclease">
    <location>
        <begin position="55"/>
        <end position="227"/>
    </location>
</feature>
<feature type="region of interest" description="Disordered" evidence="3">
    <location>
        <begin position="240"/>
        <end position="269"/>
    </location>
</feature>
<feature type="compositionally biased region" description="Low complexity" evidence="3">
    <location>
        <begin position="245"/>
        <end position="261"/>
    </location>
</feature>
<feature type="active site" evidence="2">
    <location>
        <position position="184"/>
    </location>
</feature>
<feature type="sequence conflict" description="In Ref. 1; AAA98633." evidence="6" ref="1">
    <original>S</original>
    <variation>T</variation>
    <location>
        <position position="100"/>
    </location>
</feature>
<feature type="sequence conflict" description="In Ref. 1; AAA98633." evidence="6" ref="1">
    <original>GLTA</original>
    <variation>ESHP</variation>
    <location>
        <begin position="124"/>
        <end position="127"/>
    </location>
</feature>
<feature type="sequence conflict" description="In Ref. 4; AAT93024." evidence="6" ref="4">
    <original>H</original>
    <variation>R</variation>
    <location>
        <position position="181"/>
    </location>
</feature>
<feature type="sequence conflict" description="In Ref. 1." evidence="6" ref="1">
    <original>SIAQLQWYMDNYLKPPQETESVESIGSEQPESPSSSTSSLKRQRTDF</original>
    <variation>HSSIAMVHGQLLEATTGNRVGRVNRI</variation>
    <location>
        <begin position="223"/>
        <end position="269"/>
    </location>
</feature>
<name>ORN_YEAST</name>
<sequence>MKWLLFPARIVARTRPNLFSLYRRSVSQYLRPRTIQNLQSMAQTPELKTKLFKPLVWIDCEMTGLDHVNDRIIEICCIITDGHLAPVKAADGQGDSHYESVIHYGPEVMNKMNEWCIEHHGNSGLTAKVLASEKTLAQVEDELLEYIQRYIPDKNVGVLAGNSVHMDRLFMVREFPKVIDHLFYRIVDVSSIMEVARRHNPALQARNPKKEAAHTAYSDIKESIAQLQWYMDNYLKPPQETESVESIGSEQPESPSSSTSSLKRQRTDF</sequence>
<accession>P54964</accession>
<accession>D6VY61</accession>
<accession>E9P909</accession>
<protein>
    <recommendedName>
        <fullName>Oligoribonuclease, mitochondrial</fullName>
        <ecNumber>3.1.15.-</ecNumber>
    </recommendedName>
</protein>
<evidence type="ECO:0000250" key="1"/>
<evidence type="ECO:0000255" key="2"/>
<evidence type="ECO:0000256" key="3">
    <source>
        <dbReference type="SAM" id="MobiDB-lite"/>
    </source>
</evidence>
<evidence type="ECO:0000269" key="4">
    <source>
    </source>
</evidence>
<evidence type="ECO:0000269" key="5">
    <source>
    </source>
</evidence>
<evidence type="ECO:0000305" key="6"/>
<keyword id="KW-0269">Exonuclease</keyword>
<keyword id="KW-0378">Hydrolase</keyword>
<keyword id="KW-0496">Mitochondrion</keyword>
<keyword id="KW-0540">Nuclease</keyword>
<keyword id="KW-1185">Reference proteome</keyword>
<keyword id="KW-0809">Transit peptide</keyword>